<protein>
    <recommendedName>
        <fullName evidence="2">Bifunctional protein FolD</fullName>
    </recommendedName>
    <domain>
        <recommendedName>
            <fullName evidence="2">Methylenetetrahydrofolate dehydrogenase</fullName>
            <ecNumber evidence="2">1.5.1.5</ecNumber>
        </recommendedName>
    </domain>
    <domain>
        <recommendedName>
            <fullName evidence="2">Methenyltetrahydrofolate cyclohydrolase</fullName>
            <ecNumber evidence="2">3.5.4.9</ecNumber>
        </recommendedName>
    </domain>
</protein>
<feature type="initiator methionine" description="Removed" evidence="1">
    <location>
        <position position="1"/>
    </location>
</feature>
<feature type="chain" id="PRO_0000199316" description="Bifunctional protein FolD">
    <location>
        <begin position="2"/>
        <end position="288"/>
    </location>
</feature>
<feature type="binding site" evidence="2">
    <location>
        <begin position="166"/>
        <end position="168"/>
    </location>
    <ligand>
        <name>NADP(+)</name>
        <dbReference type="ChEBI" id="CHEBI:58349"/>
    </ligand>
</feature>
<feature type="binding site" evidence="2">
    <location>
        <position position="232"/>
    </location>
    <ligand>
        <name>NADP(+)</name>
        <dbReference type="ChEBI" id="CHEBI:58349"/>
    </ligand>
</feature>
<keyword id="KW-0028">Amino-acid biosynthesis</keyword>
<keyword id="KW-0368">Histidine biosynthesis</keyword>
<keyword id="KW-0378">Hydrolase</keyword>
<keyword id="KW-0486">Methionine biosynthesis</keyword>
<keyword id="KW-0511">Multifunctional enzyme</keyword>
<keyword id="KW-0521">NADP</keyword>
<keyword id="KW-0554">One-carbon metabolism</keyword>
<keyword id="KW-0560">Oxidoreductase</keyword>
<keyword id="KW-0658">Purine biosynthesis</keyword>
<keyword id="KW-1185">Reference proteome</keyword>
<dbReference type="EC" id="1.5.1.5" evidence="2"/>
<dbReference type="EC" id="3.5.4.9" evidence="2"/>
<dbReference type="EMBL" id="AE006468">
    <property type="protein sequence ID" value="AAL19496.1"/>
    <property type="molecule type" value="Genomic_DNA"/>
</dbReference>
<dbReference type="RefSeq" id="NP_459537.1">
    <property type="nucleotide sequence ID" value="NC_003197.2"/>
</dbReference>
<dbReference type="RefSeq" id="WP_000729165.1">
    <property type="nucleotide sequence ID" value="NC_003197.2"/>
</dbReference>
<dbReference type="SMR" id="P58688"/>
<dbReference type="STRING" id="99287.STM0542"/>
<dbReference type="PaxDb" id="99287-STM0542"/>
<dbReference type="GeneID" id="1252062"/>
<dbReference type="KEGG" id="stm:STM0542"/>
<dbReference type="PATRIC" id="fig|99287.12.peg.575"/>
<dbReference type="HOGENOM" id="CLU_034045_2_1_6"/>
<dbReference type="OMA" id="VCHILTK"/>
<dbReference type="PhylomeDB" id="P58688"/>
<dbReference type="BioCyc" id="SENT99287:STM0542-MONOMER"/>
<dbReference type="UniPathway" id="UPA00193"/>
<dbReference type="Proteomes" id="UP000001014">
    <property type="component" value="Chromosome"/>
</dbReference>
<dbReference type="GO" id="GO:0005829">
    <property type="term" value="C:cytosol"/>
    <property type="evidence" value="ECO:0000318"/>
    <property type="project" value="GO_Central"/>
</dbReference>
<dbReference type="GO" id="GO:0004477">
    <property type="term" value="F:methenyltetrahydrofolate cyclohydrolase activity"/>
    <property type="evidence" value="ECO:0000318"/>
    <property type="project" value="GO_Central"/>
</dbReference>
<dbReference type="GO" id="GO:0004488">
    <property type="term" value="F:methylenetetrahydrofolate dehydrogenase (NADP+) activity"/>
    <property type="evidence" value="ECO:0000318"/>
    <property type="project" value="GO_Central"/>
</dbReference>
<dbReference type="GO" id="GO:0000105">
    <property type="term" value="P:L-histidine biosynthetic process"/>
    <property type="evidence" value="ECO:0007669"/>
    <property type="project" value="UniProtKB-KW"/>
</dbReference>
<dbReference type="GO" id="GO:0009086">
    <property type="term" value="P:methionine biosynthetic process"/>
    <property type="evidence" value="ECO:0007669"/>
    <property type="project" value="UniProtKB-KW"/>
</dbReference>
<dbReference type="GO" id="GO:0006164">
    <property type="term" value="P:purine nucleotide biosynthetic process"/>
    <property type="evidence" value="ECO:0007669"/>
    <property type="project" value="UniProtKB-KW"/>
</dbReference>
<dbReference type="GO" id="GO:0035999">
    <property type="term" value="P:tetrahydrofolate interconversion"/>
    <property type="evidence" value="ECO:0000318"/>
    <property type="project" value="GO_Central"/>
</dbReference>
<dbReference type="CDD" id="cd01080">
    <property type="entry name" value="NAD_bind_m-THF_DH_Cyclohyd"/>
    <property type="match status" value="1"/>
</dbReference>
<dbReference type="FunFam" id="3.40.50.10860:FF:000001">
    <property type="entry name" value="Bifunctional protein FolD"/>
    <property type="match status" value="1"/>
</dbReference>
<dbReference type="FunFam" id="3.40.50.720:FF:000006">
    <property type="entry name" value="Bifunctional protein FolD"/>
    <property type="match status" value="1"/>
</dbReference>
<dbReference type="Gene3D" id="3.40.50.10860">
    <property type="entry name" value="Leucine Dehydrogenase, chain A, domain 1"/>
    <property type="match status" value="1"/>
</dbReference>
<dbReference type="Gene3D" id="3.40.50.720">
    <property type="entry name" value="NAD(P)-binding Rossmann-like Domain"/>
    <property type="match status" value="1"/>
</dbReference>
<dbReference type="HAMAP" id="MF_01576">
    <property type="entry name" value="THF_DHG_CYH"/>
    <property type="match status" value="1"/>
</dbReference>
<dbReference type="InterPro" id="IPR046346">
    <property type="entry name" value="Aminoacid_DH-like_N_sf"/>
</dbReference>
<dbReference type="InterPro" id="IPR036291">
    <property type="entry name" value="NAD(P)-bd_dom_sf"/>
</dbReference>
<dbReference type="InterPro" id="IPR000672">
    <property type="entry name" value="THF_DH/CycHdrlase"/>
</dbReference>
<dbReference type="InterPro" id="IPR020630">
    <property type="entry name" value="THF_DH/CycHdrlase_cat_dom"/>
</dbReference>
<dbReference type="InterPro" id="IPR020867">
    <property type="entry name" value="THF_DH/CycHdrlase_CS"/>
</dbReference>
<dbReference type="InterPro" id="IPR020631">
    <property type="entry name" value="THF_DH/CycHdrlase_NAD-bd_dom"/>
</dbReference>
<dbReference type="NCBIfam" id="NF008058">
    <property type="entry name" value="PRK10792.1"/>
    <property type="match status" value="1"/>
</dbReference>
<dbReference type="NCBIfam" id="NF010783">
    <property type="entry name" value="PRK14186.1"/>
    <property type="match status" value="1"/>
</dbReference>
<dbReference type="PANTHER" id="PTHR48099:SF5">
    <property type="entry name" value="C-1-TETRAHYDROFOLATE SYNTHASE, CYTOPLASMIC"/>
    <property type="match status" value="1"/>
</dbReference>
<dbReference type="PANTHER" id="PTHR48099">
    <property type="entry name" value="C-1-TETRAHYDROFOLATE SYNTHASE, CYTOPLASMIC-RELATED"/>
    <property type="match status" value="1"/>
</dbReference>
<dbReference type="Pfam" id="PF00763">
    <property type="entry name" value="THF_DHG_CYH"/>
    <property type="match status" value="1"/>
</dbReference>
<dbReference type="Pfam" id="PF02882">
    <property type="entry name" value="THF_DHG_CYH_C"/>
    <property type="match status" value="1"/>
</dbReference>
<dbReference type="PRINTS" id="PR00085">
    <property type="entry name" value="THFDHDRGNASE"/>
</dbReference>
<dbReference type="SUPFAM" id="SSF53223">
    <property type="entry name" value="Aminoacid dehydrogenase-like, N-terminal domain"/>
    <property type="match status" value="1"/>
</dbReference>
<dbReference type="SUPFAM" id="SSF51735">
    <property type="entry name" value="NAD(P)-binding Rossmann-fold domains"/>
    <property type="match status" value="1"/>
</dbReference>
<dbReference type="PROSITE" id="PS00766">
    <property type="entry name" value="THF_DHG_CYH_1"/>
    <property type="match status" value="1"/>
</dbReference>
<dbReference type="PROSITE" id="PS00767">
    <property type="entry name" value="THF_DHG_CYH_2"/>
    <property type="match status" value="1"/>
</dbReference>
<proteinExistence type="inferred from homology"/>
<sequence>MAAKIIDGKTIAQQVRSEVAQKVQARVAAGLRAPGLAVVLVGSNPASQIYVASKRKACDEVGFVSRSYDLPETTSEAELLALIDTLNADNTIDGILVQLPLPAGIDNVKVLERIAPDKDVDGFHPYNVGRLCQRAPRLRPCTPRGIVTLLERYNIDTYGLNAVVIGASNIVGRPMSMELLLAGCTTTVTHRFTKDLRHHVEHADLLIVAVGKPGFIPGEWIKEGAIVIDVGINRLENGKVVGDVVFDEAAARASYITPVPGGVGPMTVATLIENTLQACIEYHDPQGK</sequence>
<gene>
    <name evidence="2" type="primary">folD</name>
    <name type="ordered locus">STM0542</name>
</gene>
<organism>
    <name type="scientific">Salmonella typhimurium (strain LT2 / SGSC1412 / ATCC 700720)</name>
    <dbReference type="NCBI Taxonomy" id="99287"/>
    <lineage>
        <taxon>Bacteria</taxon>
        <taxon>Pseudomonadati</taxon>
        <taxon>Pseudomonadota</taxon>
        <taxon>Gammaproteobacteria</taxon>
        <taxon>Enterobacterales</taxon>
        <taxon>Enterobacteriaceae</taxon>
        <taxon>Salmonella</taxon>
    </lineage>
</organism>
<reference key="1">
    <citation type="journal article" date="2001" name="Nature">
        <title>Complete genome sequence of Salmonella enterica serovar Typhimurium LT2.</title>
        <authorList>
            <person name="McClelland M."/>
            <person name="Sanderson K.E."/>
            <person name="Spieth J."/>
            <person name="Clifton S.W."/>
            <person name="Latreille P."/>
            <person name="Courtney L."/>
            <person name="Porwollik S."/>
            <person name="Ali J."/>
            <person name="Dante M."/>
            <person name="Du F."/>
            <person name="Hou S."/>
            <person name="Layman D."/>
            <person name="Leonard S."/>
            <person name="Nguyen C."/>
            <person name="Scott K."/>
            <person name="Holmes A."/>
            <person name="Grewal N."/>
            <person name="Mulvaney E."/>
            <person name="Ryan E."/>
            <person name="Sun H."/>
            <person name="Florea L."/>
            <person name="Miller W."/>
            <person name="Stoneking T."/>
            <person name="Nhan M."/>
            <person name="Waterston R."/>
            <person name="Wilson R.K."/>
        </authorList>
    </citation>
    <scope>NUCLEOTIDE SEQUENCE [LARGE SCALE GENOMIC DNA]</scope>
    <source>
        <strain>LT2 / SGSC1412 / ATCC 700720</strain>
    </source>
</reference>
<comment type="function">
    <text evidence="2">Catalyzes the oxidation of 5,10-methylenetetrahydrofolate to 5,10-methenyltetrahydrofolate and then the hydrolysis of 5,10-methenyltetrahydrofolate to 10-formyltetrahydrofolate.</text>
</comment>
<comment type="catalytic activity">
    <reaction evidence="2">
        <text>(6R)-5,10-methylene-5,6,7,8-tetrahydrofolate + NADP(+) = (6R)-5,10-methenyltetrahydrofolate + NADPH</text>
        <dbReference type="Rhea" id="RHEA:22812"/>
        <dbReference type="ChEBI" id="CHEBI:15636"/>
        <dbReference type="ChEBI" id="CHEBI:57455"/>
        <dbReference type="ChEBI" id="CHEBI:57783"/>
        <dbReference type="ChEBI" id="CHEBI:58349"/>
        <dbReference type="EC" id="1.5.1.5"/>
    </reaction>
</comment>
<comment type="catalytic activity">
    <reaction evidence="2">
        <text>(6R)-5,10-methenyltetrahydrofolate + H2O = (6R)-10-formyltetrahydrofolate + H(+)</text>
        <dbReference type="Rhea" id="RHEA:23700"/>
        <dbReference type="ChEBI" id="CHEBI:15377"/>
        <dbReference type="ChEBI" id="CHEBI:15378"/>
        <dbReference type="ChEBI" id="CHEBI:57455"/>
        <dbReference type="ChEBI" id="CHEBI:195366"/>
        <dbReference type="EC" id="3.5.4.9"/>
    </reaction>
</comment>
<comment type="pathway">
    <text evidence="2">One-carbon metabolism; tetrahydrofolate interconversion.</text>
</comment>
<comment type="subunit">
    <text evidence="2">Homodimer.</text>
</comment>
<comment type="similarity">
    <text evidence="2">Belongs to the tetrahydrofolate dehydrogenase/cyclohydrolase family.</text>
</comment>
<evidence type="ECO:0000250" key="1"/>
<evidence type="ECO:0000255" key="2">
    <source>
        <dbReference type="HAMAP-Rule" id="MF_01576"/>
    </source>
</evidence>
<name>FOLD_SALTY</name>
<accession>P58688</accession>